<organism>
    <name type="scientific">Acinetobacter baumannii (strain ATCC 17978 / DSM 105126 / CIP 53.77 / LMG 1025 / NCDC KC755 / 5377)</name>
    <dbReference type="NCBI Taxonomy" id="400667"/>
    <lineage>
        <taxon>Bacteria</taxon>
        <taxon>Pseudomonadati</taxon>
        <taxon>Pseudomonadota</taxon>
        <taxon>Gammaproteobacteria</taxon>
        <taxon>Moraxellales</taxon>
        <taxon>Moraxellaceae</taxon>
        <taxon>Acinetobacter</taxon>
        <taxon>Acinetobacter calcoaceticus/baumannii complex</taxon>
    </lineage>
</organism>
<accession>A3M5C7</accession>
<sequence length="363" mass="39001">MAGNSIGQLFRVTTCGESHGVGLMAIVDGVPPGLALTEEDLQKDLDRRKPGTSKFATQRKEPDQVEIISGVFEGKTTGTPIGLLIRNTDQKSKDYGNIAQTFRPGHADYTYTQKYGFRDYRGGGRSSARETAMRVAAGAIAKKYLAEKFGVLIRGHVTQIGNEVAEKLDWNEVPNNPFFCGDVDAVPRFEALVTSLREQGTSCGAKLEILAEKVPVGWGEPVFDRLDADIAHAMMSINAVKGVEIGDGFAVAGQFGHETRDELTSHGFLANHAGGILGGISSGQTIRVAIALKPTASITTPGKTINLNREDTDVLTKGRHDPCVGVRATPIAEAMLAIVLMDHFLRHRAQNADVVPPFAPIEP</sequence>
<gene>
    <name evidence="1" type="primary">aroC</name>
    <name type="ordered locus">A1S_1694</name>
</gene>
<keyword id="KW-0028">Amino-acid biosynthesis</keyword>
<keyword id="KW-0057">Aromatic amino acid biosynthesis</keyword>
<keyword id="KW-0274">FAD</keyword>
<keyword id="KW-0285">Flavoprotein</keyword>
<keyword id="KW-0288">FMN</keyword>
<keyword id="KW-0456">Lyase</keyword>
<keyword id="KW-0521">NADP</keyword>
<feature type="chain" id="PRO_0000322381" description="Chorismate synthase">
    <location>
        <begin position="1"/>
        <end position="363"/>
    </location>
</feature>
<feature type="binding site" evidence="1">
    <location>
        <position position="48"/>
    </location>
    <ligand>
        <name>NADP(+)</name>
        <dbReference type="ChEBI" id="CHEBI:58349"/>
    </ligand>
</feature>
<feature type="binding site" evidence="1">
    <location>
        <begin position="125"/>
        <end position="127"/>
    </location>
    <ligand>
        <name>FMN</name>
        <dbReference type="ChEBI" id="CHEBI:58210"/>
    </ligand>
</feature>
<feature type="binding site" evidence="1">
    <location>
        <begin position="238"/>
        <end position="239"/>
    </location>
    <ligand>
        <name>FMN</name>
        <dbReference type="ChEBI" id="CHEBI:58210"/>
    </ligand>
</feature>
<feature type="binding site" evidence="1">
    <location>
        <position position="278"/>
    </location>
    <ligand>
        <name>FMN</name>
        <dbReference type="ChEBI" id="CHEBI:58210"/>
    </ligand>
</feature>
<feature type="binding site" evidence="1">
    <location>
        <begin position="293"/>
        <end position="297"/>
    </location>
    <ligand>
        <name>FMN</name>
        <dbReference type="ChEBI" id="CHEBI:58210"/>
    </ligand>
</feature>
<feature type="binding site" evidence="1">
    <location>
        <position position="319"/>
    </location>
    <ligand>
        <name>FMN</name>
        <dbReference type="ChEBI" id="CHEBI:58210"/>
    </ligand>
</feature>
<reference key="1">
    <citation type="journal article" date="2007" name="Genes Dev.">
        <title>New insights into Acinetobacter baumannii pathogenesis revealed by high-density pyrosequencing and transposon mutagenesis.</title>
        <authorList>
            <person name="Smith M.G."/>
            <person name="Gianoulis T.A."/>
            <person name="Pukatzki S."/>
            <person name="Mekalanos J.J."/>
            <person name="Ornston L.N."/>
            <person name="Gerstein M."/>
            <person name="Snyder M."/>
        </authorList>
    </citation>
    <scope>NUCLEOTIDE SEQUENCE [LARGE SCALE GENOMIC DNA]</scope>
    <source>
        <strain>ATCC 17978 / DSM 105126 / CIP 53.77 / LMG 1025 / NCDC KC755 / 5377</strain>
    </source>
</reference>
<evidence type="ECO:0000255" key="1">
    <source>
        <dbReference type="HAMAP-Rule" id="MF_00300"/>
    </source>
</evidence>
<comment type="function">
    <text evidence="1">Catalyzes the anti-1,4-elimination of the C-3 phosphate and the C-6 proR hydrogen from 5-enolpyruvylshikimate-3-phosphate (EPSP) to yield chorismate, which is the branch point compound that serves as the starting substrate for the three terminal pathways of aromatic amino acid biosynthesis. This reaction introduces a second double bond into the aromatic ring system.</text>
</comment>
<comment type="catalytic activity">
    <reaction evidence="1">
        <text>5-O-(1-carboxyvinyl)-3-phosphoshikimate = chorismate + phosphate</text>
        <dbReference type="Rhea" id="RHEA:21020"/>
        <dbReference type="ChEBI" id="CHEBI:29748"/>
        <dbReference type="ChEBI" id="CHEBI:43474"/>
        <dbReference type="ChEBI" id="CHEBI:57701"/>
        <dbReference type="EC" id="4.2.3.5"/>
    </reaction>
</comment>
<comment type="cofactor">
    <cofactor evidence="1">
        <name>FMNH2</name>
        <dbReference type="ChEBI" id="CHEBI:57618"/>
    </cofactor>
    <text evidence="1">Reduced FMN (FMNH(2)).</text>
</comment>
<comment type="pathway">
    <text evidence="1">Metabolic intermediate biosynthesis; chorismate biosynthesis; chorismate from D-erythrose 4-phosphate and phosphoenolpyruvate: step 7/7.</text>
</comment>
<comment type="subunit">
    <text evidence="1">Homotetramer.</text>
</comment>
<comment type="similarity">
    <text evidence="1">Belongs to the chorismate synthase family.</text>
</comment>
<name>AROC_ACIBT</name>
<proteinExistence type="inferred from homology"/>
<dbReference type="EC" id="4.2.3.5" evidence="1"/>
<dbReference type="EMBL" id="CP000521">
    <property type="protein sequence ID" value="ABO12121.2"/>
    <property type="molecule type" value="Genomic_DNA"/>
</dbReference>
<dbReference type="RefSeq" id="WP_000918444.1">
    <property type="nucleotide sequence ID" value="NZ_CP053098.1"/>
</dbReference>
<dbReference type="SMR" id="A3M5C7"/>
<dbReference type="GeneID" id="92893903"/>
<dbReference type="KEGG" id="acb:A1S_1694"/>
<dbReference type="HOGENOM" id="CLU_034547_0_2_6"/>
<dbReference type="UniPathway" id="UPA00053">
    <property type="reaction ID" value="UER00090"/>
</dbReference>
<dbReference type="GO" id="GO:0005829">
    <property type="term" value="C:cytosol"/>
    <property type="evidence" value="ECO:0007669"/>
    <property type="project" value="TreeGrafter"/>
</dbReference>
<dbReference type="GO" id="GO:0004107">
    <property type="term" value="F:chorismate synthase activity"/>
    <property type="evidence" value="ECO:0007669"/>
    <property type="project" value="UniProtKB-UniRule"/>
</dbReference>
<dbReference type="GO" id="GO:0010181">
    <property type="term" value="F:FMN binding"/>
    <property type="evidence" value="ECO:0007669"/>
    <property type="project" value="TreeGrafter"/>
</dbReference>
<dbReference type="GO" id="GO:0008652">
    <property type="term" value="P:amino acid biosynthetic process"/>
    <property type="evidence" value="ECO:0007669"/>
    <property type="project" value="UniProtKB-KW"/>
</dbReference>
<dbReference type="GO" id="GO:0009073">
    <property type="term" value="P:aromatic amino acid family biosynthetic process"/>
    <property type="evidence" value="ECO:0007669"/>
    <property type="project" value="UniProtKB-KW"/>
</dbReference>
<dbReference type="GO" id="GO:0009423">
    <property type="term" value="P:chorismate biosynthetic process"/>
    <property type="evidence" value="ECO:0007669"/>
    <property type="project" value="UniProtKB-UniRule"/>
</dbReference>
<dbReference type="CDD" id="cd07304">
    <property type="entry name" value="Chorismate_synthase"/>
    <property type="match status" value="1"/>
</dbReference>
<dbReference type="FunFam" id="3.60.150.10:FF:000001">
    <property type="entry name" value="Chorismate synthase"/>
    <property type="match status" value="1"/>
</dbReference>
<dbReference type="Gene3D" id="3.60.150.10">
    <property type="entry name" value="Chorismate synthase AroC"/>
    <property type="match status" value="1"/>
</dbReference>
<dbReference type="HAMAP" id="MF_00300">
    <property type="entry name" value="Chorismate_synth"/>
    <property type="match status" value="1"/>
</dbReference>
<dbReference type="InterPro" id="IPR000453">
    <property type="entry name" value="Chorismate_synth"/>
</dbReference>
<dbReference type="InterPro" id="IPR035904">
    <property type="entry name" value="Chorismate_synth_AroC_sf"/>
</dbReference>
<dbReference type="InterPro" id="IPR020541">
    <property type="entry name" value="Chorismate_synthase_CS"/>
</dbReference>
<dbReference type="NCBIfam" id="TIGR00033">
    <property type="entry name" value="aroC"/>
    <property type="match status" value="1"/>
</dbReference>
<dbReference type="NCBIfam" id="NF003793">
    <property type="entry name" value="PRK05382.1"/>
    <property type="match status" value="1"/>
</dbReference>
<dbReference type="PANTHER" id="PTHR21085">
    <property type="entry name" value="CHORISMATE SYNTHASE"/>
    <property type="match status" value="1"/>
</dbReference>
<dbReference type="PANTHER" id="PTHR21085:SF0">
    <property type="entry name" value="CHORISMATE SYNTHASE"/>
    <property type="match status" value="1"/>
</dbReference>
<dbReference type="Pfam" id="PF01264">
    <property type="entry name" value="Chorismate_synt"/>
    <property type="match status" value="1"/>
</dbReference>
<dbReference type="PIRSF" id="PIRSF001456">
    <property type="entry name" value="Chorismate_synth"/>
    <property type="match status" value="1"/>
</dbReference>
<dbReference type="SUPFAM" id="SSF103263">
    <property type="entry name" value="Chorismate synthase, AroC"/>
    <property type="match status" value="1"/>
</dbReference>
<dbReference type="PROSITE" id="PS00787">
    <property type="entry name" value="CHORISMATE_SYNTHASE_1"/>
    <property type="match status" value="1"/>
</dbReference>
<dbReference type="PROSITE" id="PS00788">
    <property type="entry name" value="CHORISMATE_SYNTHASE_2"/>
    <property type="match status" value="1"/>
</dbReference>
<dbReference type="PROSITE" id="PS00789">
    <property type="entry name" value="CHORISMATE_SYNTHASE_3"/>
    <property type="match status" value="1"/>
</dbReference>
<protein>
    <recommendedName>
        <fullName evidence="1">Chorismate synthase</fullName>
        <shortName evidence="1">CS</shortName>
        <ecNumber evidence="1">4.2.3.5</ecNumber>
    </recommendedName>
    <alternativeName>
        <fullName evidence="1">5-enolpyruvylshikimate-3-phosphate phospholyase</fullName>
    </alternativeName>
</protein>